<organism>
    <name type="scientific">Limosilactobacillus reuteri (strain DSM 20016)</name>
    <name type="common">Lactobacillus reuteri</name>
    <dbReference type="NCBI Taxonomy" id="557436"/>
    <lineage>
        <taxon>Bacteria</taxon>
        <taxon>Bacillati</taxon>
        <taxon>Bacillota</taxon>
        <taxon>Bacilli</taxon>
        <taxon>Lactobacillales</taxon>
        <taxon>Lactobacillaceae</taxon>
        <taxon>Limosilactobacillus</taxon>
    </lineage>
</organism>
<evidence type="ECO:0000255" key="1">
    <source>
        <dbReference type="HAMAP-Rule" id="MF_01343"/>
    </source>
</evidence>
<evidence type="ECO:0000305" key="2"/>
<name>RS15_LIMRD</name>
<feature type="chain" id="PRO_1000067692" description="Small ribosomal subunit protein uS15">
    <location>
        <begin position="1"/>
        <end position="89"/>
    </location>
</feature>
<reference key="1">
    <citation type="journal article" date="2011" name="PLoS Genet.">
        <title>The evolution of host specialization in the vertebrate gut symbiont Lactobacillus reuteri.</title>
        <authorList>
            <person name="Frese S.A."/>
            <person name="Benson A.K."/>
            <person name="Tannock G.W."/>
            <person name="Loach D.M."/>
            <person name="Kim J."/>
            <person name="Zhang M."/>
            <person name="Oh P.L."/>
            <person name="Heng N.C."/>
            <person name="Patil P.B."/>
            <person name="Juge N."/>
            <person name="Mackenzie D.A."/>
            <person name="Pearson B.M."/>
            <person name="Lapidus A."/>
            <person name="Dalin E."/>
            <person name="Tice H."/>
            <person name="Goltsman E."/>
            <person name="Land M."/>
            <person name="Hauser L."/>
            <person name="Ivanova N."/>
            <person name="Kyrpides N.C."/>
            <person name="Walter J."/>
        </authorList>
    </citation>
    <scope>NUCLEOTIDE SEQUENCE [LARGE SCALE GENOMIC DNA]</scope>
    <source>
        <strain>DSM 20016</strain>
    </source>
</reference>
<sequence>MAISKERKDQIIKEFATHEGDTGSTQVQVAVLTADINELNDHLRTHKHDYHSQRGLMKKIGHRRNLLAYLRRTDLPAYRELIQKLGLRR</sequence>
<dbReference type="EMBL" id="CP000705">
    <property type="protein sequence ID" value="ABQ82913.1"/>
    <property type="molecule type" value="Genomic_DNA"/>
</dbReference>
<dbReference type="RefSeq" id="WP_003666833.1">
    <property type="nucleotide sequence ID" value="NZ_AZDD01000002.1"/>
</dbReference>
<dbReference type="SMR" id="A5VJ89"/>
<dbReference type="STRING" id="557436.Lreu_0648"/>
<dbReference type="GeneID" id="77190805"/>
<dbReference type="KEGG" id="lre:Lreu_0648"/>
<dbReference type="PATRIC" id="fig|557436.17.peg.720"/>
<dbReference type="eggNOG" id="COG0184">
    <property type="taxonomic scope" value="Bacteria"/>
</dbReference>
<dbReference type="HOGENOM" id="CLU_148518_0_0_9"/>
<dbReference type="OMA" id="RINYLTE"/>
<dbReference type="Proteomes" id="UP000001991">
    <property type="component" value="Chromosome"/>
</dbReference>
<dbReference type="GO" id="GO:0022627">
    <property type="term" value="C:cytosolic small ribosomal subunit"/>
    <property type="evidence" value="ECO:0007669"/>
    <property type="project" value="TreeGrafter"/>
</dbReference>
<dbReference type="GO" id="GO:0019843">
    <property type="term" value="F:rRNA binding"/>
    <property type="evidence" value="ECO:0007669"/>
    <property type="project" value="UniProtKB-UniRule"/>
</dbReference>
<dbReference type="GO" id="GO:0003735">
    <property type="term" value="F:structural constituent of ribosome"/>
    <property type="evidence" value="ECO:0007669"/>
    <property type="project" value="InterPro"/>
</dbReference>
<dbReference type="GO" id="GO:0006412">
    <property type="term" value="P:translation"/>
    <property type="evidence" value="ECO:0007669"/>
    <property type="project" value="UniProtKB-UniRule"/>
</dbReference>
<dbReference type="CDD" id="cd00677">
    <property type="entry name" value="S15_NS1_EPRS_RNA-bind"/>
    <property type="match status" value="1"/>
</dbReference>
<dbReference type="FunFam" id="1.10.287.10:FF:000002">
    <property type="entry name" value="30S ribosomal protein S15"/>
    <property type="match status" value="1"/>
</dbReference>
<dbReference type="Gene3D" id="6.10.250.3130">
    <property type="match status" value="1"/>
</dbReference>
<dbReference type="Gene3D" id="1.10.287.10">
    <property type="entry name" value="S15/NS1, RNA-binding"/>
    <property type="match status" value="1"/>
</dbReference>
<dbReference type="HAMAP" id="MF_01343_B">
    <property type="entry name" value="Ribosomal_uS15_B"/>
    <property type="match status" value="1"/>
</dbReference>
<dbReference type="InterPro" id="IPR000589">
    <property type="entry name" value="Ribosomal_uS15"/>
</dbReference>
<dbReference type="InterPro" id="IPR005290">
    <property type="entry name" value="Ribosomal_uS15_bac-type"/>
</dbReference>
<dbReference type="InterPro" id="IPR009068">
    <property type="entry name" value="uS15_NS1_RNA-bd_sf"/>
</dbReference>
<dbReference type="NCBIfam" id="TIGR00952">
    <property type="entry name" value="S15_bact"/>
    <property type="match status" value="1"/>
</dbReference>
<dbReference type="PANTHER" id="PTHR23321">
    <property type="entry name" value="RIBOSOMAL PROTEIN S15, BACTERIAL AND ORGANELLAR"/>
    <property type="match status" value="1"/>
</dbReference>
<dbReference type="PANTHER" id="PTHR23321:SF26">
    <property type="entry name" value="SMALL RIBOSOMAL SUBUNIT PROTEIN US15M"/>
    <property type="match status" value="1"/>
</dbReference>
<dbReference type="Pfam" id="PF00312">
    <property type="entry name" value="Ribosomal_S15"/>
    <property type="match status" value="1"/>
</dbReference>
<dbReference type="SMART" id="SM01387">
    <property type="entry name" value="Ribosomal_S15"/>
    <property type="match status" value="1"/>
</dbReference>
<dbReference type="SUPFAM" id="SSF47060">
    <property type="entry name" value="S15/NS1 RNA-binding domain"/>
    <property type="match status" value="1"/>
</dbReference>
<dbReference type="PROSITE" id="PS00362">
    <property type="entry name" value="RIBOSOMAL_S15"/>
    <property type="match status" value="1"/>
</dbReference>
<gene>
    <name evidence="1" type="primary">rpsO</name>
    <name type="ordered locus">Lreu_0648</name>
</gene>
<proteinExistence type="inferred from homology"/>
<keyword id="KW-1185">Reference proteome</keyword>
<keyword id="KW-0687">Ribonucleoprotein</keyword>
<keyword id="KW-0689">Ribosomal protein</keyword>
<keyword id="KW-0694">RNA-binding</keyword>
<keyword id="KW-0699">rRNA-binding</keyword>
<accession>A5VJ89</accession>
<comment type="function">
    <text evidence="1">One of the primary rRNA binding proteins, it binds directly to 16S rRNA where it helps nucleate assembly of the platform of the 30S subunit by binding and bridging several RNA helices of the 16S rRNA.</text>
</comment>
<comment type="function">
    <text evidence="1">Forms an intersubunit bridge (bridge B4) with the 23S rRNA of the 50S subunit in the ribosome.</text>
</comment>
<comment type="subunit">
    <text evidence="1">Part of the 30S ribosomal subunit. Forms a bridge to the 50S subunit in the 70S ribosome, contacting the 23S rRNA.</text>
</comment>
<comment type="similarity">
    <text evidence="1">Belongs to the universal ribosomal protein uS15 family.</text>
</comment>
<protein>
    <recommendedName>
        <fullName evidence="1">Small ribosomal subunit protein uS15</fullName>
    </recommendedName>
    <alternativeName>
        <fullName evidence="2">30S ribosomal protein S15</fullName>
    </alternativeName>
</protein>